<comment type="function">
    <text evidence="1">Catalyzes the attachment of proline to tRNA(Pro) in a two-step reaction: proline is first activated by ATP to form Pro-AMP and then transferred to the acceptor end of tRNA(Pro).</text>
</comment>
<comment type="catalytic activity">
    <reaction evidence="1">
        <text>tRNA(Pro) + L-proline + ATP = L-prolyl-tRNA(Pro) + AMP + diphosphate</text>
        <dbReference type="Rhea" id="RHEA:14305"/>
        <dbReference type="Rhea" id="RHEA-COMP:9700"/>
        <dbReference type="Rhea" id="RHEA-COMP:9702"/>
        <dbReference type="ChEBI" id="CHEBI:30616"/>
        <dbReference type="ChEBI" id="CHEBI:33019"/>
        <dbReference type="ChEBI" id="CHEBI:60039"/>
        <dbReference type="ChEBI" id="CHEBI:78442"/>
        <dbReference type="ChEBI" id="CHEBI:78532"/>
        <dbReference type="ChEBI" id="CHEBI:456215"/>
        <dbReference type="EC" id="6.1.1.15"/>
    </reaction>
</comment>
<comment type="subunit">
    <text evidence="1">Homodimer.</text>
</comment>
<comment type="subcellular location">
    <subcellularLocation>
        <location evidence="1">Cytoplasm</location>
    </subcellularLocation>
</comment>
<comment type="domain">
    <text evidence="1">Consists of three domains: the N-terminal catalytic domain, the anticodon-binding domain and the C-terminal extension.</text>
</comment>
<comment type="similarity">
    <text evidence="1">Belongs to the class-II aminoacyl-tRNA synthetase family. ProS type 3 subfamily.</text>
</comment>
<feature type="chain" id="PRO_1000215560" description="Proline--tRNA ligase">
    <location>
        <begin position="1"/>
        <end position="477"/>
    </location>
</feature>
<proteinExistence type="inferred from homology"/>
<keyword id="KW-0030">Aminoacyl-tRNA synthetase</keyword>
<keyword id="KW-0067">ATP-binding</keyword>
<keyword id="KW-0963">Cytoplasm</keyword>
<keyword id="KW-0436">Ligase</keyword>
<keyword id="KW-0547">Nucleotide-binding</keyword>
<keyword id="KW-0648">Protein biosynthesis</keyword>
<keyword id="KW-1185">Reference proteome</keyword>
<dbReference type="EC" id="6.1.1.15" evidence="1"/>
<dbReference type="EMBL" id="CP000885">
    <property type="protein sequence ID" value="ABX44184.1"/>
    <property type="molecule type" value="Genomic_DNA"/>
</dbReference>
<dbReference type="RefSeq" id="WP_012201832.1">
    <property type="nucleotide sequence ID" value="NC_010001.1"/>
</dbReference>
<dbReference type="SMR" id="A9KL35"/>
<dbReference type="STRING" id="357809.Cphy_3837"/>
<dbReference type="KEGG" id="cpy:Cphy_3837"/>
<dbReference type="eggNOG" id="COG0441">
    <property type="taxonomic scope" value="Bacteria"/>
</dbReference>
<dbReference type="HOGENOM" id="CLU_001882_4_2_9"/>
<dbReference type="OrthoDB" id="9809052at2"/>
<dbReference type="Proteomes" id="UP000000370">
    <property type="component" value="Chromosome"/>
</dbReference>
<dbReference type="GO" id="GO:0017101">
    <property type="term" value="C:aminoacyl-tRNA synthetase multienzyme complex"/>
    <property type="evidence" value="ECO:0007669"/>
    <property type="project" value="TreeGrafter"/>
</dbReference>
<dbReference type="GO" id="GO:0005737">
    <property type="term" value="C:cytoplasm"/>
    <property type="evidence" value="ECO:0007669"/>
    <property type="project" value="UniProtKB-SubCell"/>
</dbReference>
<dbReference type="GO" id="GO:0005524">
    <property type="term" value="F:ATP binding"/>
    <property type="evidence" value="ECO:0007669"/>
    <property type="project" value="UniProtKB-UniRule"/>
</dbReference>
<dbReference type="GO" id="GO:0140096">
    <property type="term" value="F:catalytic activity, acting on a protein"/>
    <property type="evidence" value="ECO:0007669"/>
    <property type="project" value="UniProtKB-ARBA"/>
</dbReference>
<dbReference type="GO" id="GO:0004827">
    <property type="term" value="F:proline-tRNA ligase activity"/>
    <property type="evidence" value="ECO:0007669"/>
    <property type="project" value="UniProtKB-UniRule"/>
</dbReference>
<dbReference type="GO" id="GO:0016740">
    <property type="term" value="F:transferase activity"/>
    <property type="evidence" value="ECO:0007669"/>
    <property type="project" value="UniProtKB-ARBA"/>
</dbReference>
<dbReference type="GO" id="GO:0006433">
    <property type="term" value="P:prolyl-tRNA aminoacylation"/>
    <property type="evidence" value="ECO:0007669"/>
    <property type="project" value="UniProtKB-UniRule"/>
</dbReference>
<dbReference type="CDD" id="cd00862">
    <property type="entry name" value="ProRS_anticodon_zinc"/>
    <property type="match status" value="1"/>
</dbReference>
<dbReference type="CDD" id="cd00778">
    <property type="entry name" value="ProRS_core_arch_euk"/>
    <property type="match status" value="1"/>
</dbReference>
<dbReference type="FunFam" id="3.40.50.800:FF:000005">
    <property type="entry name" value="bifunctional glutamate/proline--tRNA ligase"/>
    <property type="match status" value="1"/>
</dbReference>
<dbReference type="FunFam" id="3.30.110.30:FF:000005">
    <property type="entry name" value="Proline--tRNA ligase"/>
    <property type="match status" value="1"/>
</dbReference>
<dbReference type="FunFam" id="3.30.930.10:FF:000023">
    <property type="entry name" value="Proline--tRNA ligase"/>
    <property type="match status" value="1"/>
</dbReference>
<dbReference type="Gene3D" id="3.40.50.800">
    <property type="entry name" value="Anticodon-binding domain"/>
    <property type="match status" value="1"/>
</dbReference>
<dbReference type="Gene3D" id="3.30.930.10">
    <property type="entry name" value="Bira Bifunctional Protein, Domain 2"/>
    <property type="match status" value="1"/>
</dbReference>
<dbReference type="Gene3D" id="3.30.110.30">
    <property type="entry name" value="C-terminal domain of ProRS"/>
    <property type="match status" value="1"/>
</dbReference>
<dbReference type="HAMAP" id="MF_01571">
    <property type="entry name" value="Pro_tRNA_synth_type3"/>
    <property type="match status" value="1"/>
</dbReference>
<dbReference type="InterPro" id="IPR002314">
    <property type="entry name" value="aa-tRNA-synt_IIb"/>
</dbReference>
<dbReference type="InterPro" id="IPR006195">
    <property type="entry name" value="aa-tRNA-synth_II"/>
</dbReference>
<dbReference type="InterPro" id="IPR045864">
    <property type="entry name" value="aa-tRNA-synth_II/BPL/LPL"/>
</dbReference>
<dbReference type="InterPro" id="IPR004154">
    <property type="entry name" value="Anticodon-bd"/>
</dbReference>
<dbReference type="InterPro" id="IPR036621">
    <property type="entry name" value="Anticodon-bd_dom_sf"/>
</dbReference>
<dbReference type="InterPro" id="IPR002316">
    <property type="entry name" value="Pro-tRNA-ligase_IIa"/>
</dbReference>
<dbReference type="InterPro" id="IPR004499">
    <property type="entry name" value="Pro-tRNA-ligase_IIa_arc-type"/>
</dbReference>
<dbReference type="InterPro" id="IPR016061">
    <property type="entry name" value="Pro-tRNA_ligase_II_C"/>
</dbReference>
<dbReference type="InterPro" id="IPR017449">
    <property type="entry name" value="Pro-tRNA_synth_II"/>
</dbReference>
<dbReference type="InterPro" id="IPR033721">
    <property type="entry name" value="ProRS_core_arch_euk"/>
</dbReference>
<dbReference type="NCBIfam" id="TIGR00408">
    <property type="entry name" value="proS_fam_I"/>
    <property type="match status" value="1"/>
</dbReference>
<dbReference type="PANTHER" id="PTHR43382:SF2">
    <property type="entry name" value="BIFUNCTIONAL GLUTAMATE_PROLINE--TRNA LIGASE"/>
    <property type="match status" value="1"/>
</dbReference>
<dbReference type="PANTHER" id="PTHR43382">
    <property type="entry name" value="PROLYL-TRNA SYNTHETASE"/>
    <property type="match status" value="1"/>
</dbReference>
<dbReference type="Pfam" id="PF03129">
    <property type="entry name" value="HGTP_anticodon"/>
    <property type="match status" value="1"/>
</dbReference>
<dbReference type="Pfam" id="PF09180">
    <property type="entry name" value="ProRS-C_1"/>
    <property type="match status" value="1"/>
</dbReference>
<dbReference type="Pfam" id="PF00587">
    <property type="entry name" value="tRNA-synt_2b"/>
    <property type="match status" value="1"/>
</dbReference>
<dbReference type="PRINTS" id="PR01046">
    <property type="entry name" value="TRNASYNTHPRO"/>
</dbReference>
<dbReference type="SMART" id="SM00946">
    <property type="entry name" value="ProRS-C_1"/>
    <property type="match status" value="1"/>
</dbReference>
<dbReference type="SUPFAM" id="SSF64586">
    <property type="entry name" value="C-terminal domain of ProRS"/>
    <property type="match status" value="1"/>
</dbReference>
<dbReference type="SUPFAM" id="SSF52954">
    <property type="entry name" value="Class II aaRS ABD-related"/>
    <property type="match status" value="1"/>
</dbReference>
<dbReference type="SUPFAM" id="SSF55681">
    <property type="entry name" value="Class II aaRS and biotin synthetases"/>
    <property type="match status" value="1"/>
</dbReference>
<dbReference type="PROSITE" id="PS50862">
    <property type="entry name" value="AA_TRNA_LIGASE_II"/>
    <property type="match status" value="1"/>
</dbReference>
<protein>
    <recommendedName>
        <fullName evidence="1">Proline--tRNA ligase</fullName>
        <ecNumber evidence="1">6.1.1.15</ecNumber>
    </recommendedName>
    <alternativeName>
        <fullName evidence="1">Prolyl-tRNA synthetase</fullName>
        <shortName evidence="1">ProRS</shortName>
    </alternativeName>
</protein>
<gene>
    <name evidence="1" type="primary">proS</name>
    <name type="ordered locus">Cphy_3837</name>
</gene>
<organism>
    <name type="scientific">Lachnoclostridium phytofermentans (strain ATCC 700394 / DSM 18823 / ISDg)</name>
    <name type="common">Clostridium phytofermentans</name>
    <dbReference type="NCBI Taxonomy" id="357809"/>
    <lineage>
        <taxon>Bacteria</taxon>
        <taxon>Bacillati</taxon>
        <taxon>Bacillota</taxon>
        <taxon>Clostridia</taxon>
        <taxon>Lachnospirales</taxon>
        <taxon>Lachnospiraceae</taxon>
    </lineage>
</organism>
<name>SYP_LACP7</name>
<evidence type="ECO:0000255" key="1">
    <source>
        <dbReference type="HAMAP-Rule" id="MF_01571"/>
    </source>
</evidence>
<reference key="1">
    <citation type="submission" date="2007-11" db="EMBL/GenBank/DDBJ databases">
        <title>Complete genome sequence of Clostridium phytofermentans ISDg.</title>
        <authorList>
            <person name="Leschine S.B."/>
            <person name="Warnick T.A."/>
            <person name="Blanchard J.L."/>
            <person name="Schnell D.J."/>
            <person name="Petit E.L."/>
            <person name="LaTouf W.G."/>
            <person name="Copeland A."/>
            <person name="Lucas S."/>
            <person name="Lapidus A."/>
            <person name="Barry K."/>
            <person name="Glavina del Rio T."/>
            <person name="Dalin E."/>
            <person name="Tice H."/>
            <person name="Pitluck S."/>
            <person name="Kiss H."/>
            <person name="Brettin T."/>
            <person name="Bruce D."/>
            <person name="Detter J.C."/>
            <person name="Han C."/>
            <person name="Kuske C."/>
            <person name="Schmutz J."/>
            <person name="Larimer F."/>
            <person name="Land M."/>
            <person name="Hauser L."/>
            <person name="Kyrpides N."/>
            <person name="Kim E.A."/>
            <person name="Richardson P."/>
        </authorList>
    </citation>
    <scope>NUCLEOTIDE SEQUENCE [LARGE SCALE GENOMIC DNA]</scope>
    <source>
        <strain>ATCC 700394 / DSM 18823 / ISDg</strain>
    </source>
</reference>
<accession>A9KL35</accession>
<sequence length="477" mass="54240">MANDKKLVESITSMDEDFAQWYTDVVKKAELVDYSGVRGCTIFRPAGYAIWENIQKELDARFKATGVENVYMPMFIPESLLNKEKDHVEGFAPEVAWVTHGGGEQLQERLCVRPTSETLFCDFYSHIIESYRDLPKLYNQWCSVVRWEKTTRPFLRTLEFLWQEGHTAHATAEEAEERTIQMLNLYADFCEEVLAIPMVRGRKTDKEKFAGAEATYTIEALMHDGKALQSGTSHNFGDGFAKAFNIQYTDKENKLQYVHQTSWGMTTRLIGALIMVHGDNSGLVLPPRIAPTQVVIVPIMQKKEGVLEKAAELREKLGAFRVKVDDSDKSPGWKFSEHEMRGIPVRVEIGPKDIEANQAVLVRRDTREKTVVSLDEIDTKIGEILEAMQKEMLERARNHRDAHTYEAHSTEEFADVVANKPGFVKAMWCGERACEDEIKEKTGATSRCMPFAQEHIADTCVCCGKQAKSLVYWGKAY</sequence>